<sequence length="761" mass="87565">MWRLKIADGGNNPYLYSTNNFIGRQTWEFDPNYGTPEERDEVEQARLHFWNHRHEIKPSGDTLWRMQFIREKKFKQTIPQVKIEDDEEISYDKVTATMRRSVHLLEALLADDGHWPAENSGPSFFIQPLVMCLYITGHLNSVFPAEHRKEILRYVYSHQNKDGGWGLHMEGHSIMFGTTLSYICMRLLGEGPDGGLNGACTRARKWILDHGGAIANPSWGKVWLSILGVHEWVGCNPLPPEFWLFPSFLPMSPGKMWSYCRLVFMPMSYLYGRRFVGPITPLVLQLRKELYAQPYNDIKWKSSRHVCAKEDIYYPHPLLQDLMWDSLYILTEPLLTRWPFNKLRKKALATTMRHIHYEDENSRYITIGSVEKILCMLACWDEDPNGVCFKKHLARIPDYIWVAEDGMKMQTFGSQVWDASIGIQALLATELTHDIAPILKKGHEFIKASQVRDNPSGDFKSMYRHISKGSWTFSDQDHGWQLSDCTTIGLTCCLLLSTMPPETVGEKMDPEQLKDAVNVILSLQSENGGLAAWEPAGSSNWLEMLNPIEFIEDIVIEHEYVECTGTGMEALVLFKKLYPKHRTKEVESFLTNAARYLDNTQMPDGSWYGEWGICFTYGTYYALGGLAAIEKTYENCQSIRKAVRFLLKTQGEDGGWGESYRSCAEKIYIPLDGNRSTVVHTAWAMLGLMHSKQEERDPIPLHRAAKLLINSQMENGDFPQQDTTGAFKKNCLLHYPMYRNIYTLWALAQYRKKVLRQPTGI</sequence>
<dbReference type="EC" id="5.4.99.46"/>
<dbReference type="EMBL" id="AB609123">
    <property type="protein sequence ID" value="BAK52535.1"/>
    <property type="molecule type" value="mRNA"/>
</dbReference>
<dbReference type="SMR" id="F8WQD0"/>
<dbReference type="KEGG" id="ag:BAK52535"/>
<dbReference type="GO" id="GO:0005811">
    <property type="term" value="C:lipid droplet"/>
    <property type="evidence" value="ECO:0007669"/>
    <property type="project" value="InterPro"/>
</dbReference>
<dbReference type="GO" id="GO:0042300">
    <property type="term" value="F:beta-amyrin synthase activity"/>
    <property type="evidence" value="ECO:0007669"/>
    <property type="project" value="TreeGrafter"/>
</dbReference>
<dbReference type="GO" id="GO:0031559">
    <property type="term" value="F:oxidosqualene cyclase activity"/>
    <property type="evidence" value="ECO:0000314"/>
    <property type="project" value="UniProtKB"/>
</dbReference>
<dbReference type="GO" id="GO:0016104">
    <property type="term" value="P:triterpenoid biosynthetic process"/>
    <property type="evidence" value="ECO:0000314"/>
    <property type="project" value="UniProtKB"/>
</dbReference>
<dbReference type="CDD" id="cd02892">
    <property type="entry name" value="SQCY_1"/>
    <property type="match status" value="1"/>
</dbReference>
<dbReference type="FunFam" id="1.50.10.20:FF:000011">
    <property type="entry name" value="Terpene cyclase/mutase family member"/>
    <property type="match status" value="1"/>
</dbReference>
<dbReference type="FunFam" id="1.50.10.20:FF:000064">
    <property type="entry name" value="Uncharacterized protein"/>
    <property type="match status" value="1"/>
</dbReference>
<dbReference type="Gene3D" id="1.50.10.20">
    <property type="match status" value="2"/>
</dbReference>
<dbReference type="InterPro" id="IPR032696">
    <property type="entry name" value="SQ_cyclase_C"/>
</dbReference>
<dbReference type="InterPro" id="IPR032697">
    <property type="entry name" value="SQ_cyclase_N"/>
</dbReference>
<dbReference type="InterPro" id="IPR018333">
    <property type="entry name" value="Squalene_cyclase"/>
</dbReference>
<dbReference type="InterPro" id="IPR002365">
    <property type="entry name" value="Terpene_synthase_CS"/>
</dbReference>
<dbReference type="InterPro" id="IPR008930">
    <property type="entry name" value="Terpenoid_cyclase/PrenylTrfase"/>
</dbReference>
<dbReference type="NCBIfam" id="TIGR01787">
    <property type="entry name" value="squalene_cyclas"/>
    <property type="match status" value="1"/>
</dbReference>
<dbReference type="PANTHER" id="PTHR11764:SF58">
    <property type="entry name" value="BETA-AMYRIN SYNTHASE-RELATED"/>
    <property type="match status" value="1"/>
</dbReference>
<dbReference type="PANTHER" id="PTHR11764">
    <property type="entry name" value="TERPENE CYCLASE/MUTASE FAMILY MEMBER"/>
    <property type="match status" value="1"/>
</dbReference>
<dbReference type="Pfam" id="PF13243">
    <property type="entry name" value="SQHop_cyclase_C"/>
    <property type="match status" value="1"/>
</dbReference>
<dbReference type="Pfam" id="PF13249">
    <property type="entry name" value="SQHop_cyclase_N"/>
    <property type="match status" value="1"/>
</dbReference>
<dbReference type="SFLD" id="SFLDG01016">
    <property type="entry name" value="Prenyltransferase_Like_2"/>
    <property type="match status" value="1"/>
</dbReference>
<dbReference type="SUPFAM" id="SSF48239">
    <property type="entry name" value="Terpenoid cyclases/Protein prenyltransferases"/>
    <property type="match status" value="2"/>
</dbReference>
<dbReference type="PROSITE" id="PS01074">
    <property type="entry name" value="TERPENE_SYNTHASES"/>
    <property type="match status" value="1"/>
</dbReference>
<protein>
    <recommendedName>
        <fullName>Shionone synthase</fullName>
        <shortName>AtaSHS</shortName>
        <ecNumber>5.4.99.46</ecNumber>
    </recommendedName>
</protein>
<gene>
    <name type="primary">SHS1</name>
    <name type="synonym">ZW1</name>
</gene>
<reference key="1">
    <citation type="journal article" date="2011" name="FEBS Lett.">
        <title>Molecular characterization of an oxidosqualene cyclase that yields shionone, a unique tetracyclic triterpene ketone of Aster tataricus.</title>
        <authorList>
            <person name="Sawai S."/>
            <person name="Uchiyama H."/>
            <person name="Mizuno S."/>
            <person name="Aoki T."/>
            <person name="Akashi T."/>
            <person name="Ayabe S."/>
            <person name="Takahashi T."/>
        </authorList>
    </citation>
    <scope>NUCLEOTIDE SEQUENCE [MRNA]</scope>
    <scope>FUNCTION</scope>
    <scope>CATALYTIC ACTIVITY</scope>
    <scope>TISSUE SPECIFICITY</scope>
</reference>
<organism>
    <name type="scientific">Aster tataricus</name>
    <name type="common">Tartarian aster</name>
    <dbReference type="NCBI Taxonomy" id="588669"/>
    <lineage>
        <taxon>Eukaryota</taxon>
        <taxon>Viridiplantae</taxon>
        <taxon>Streptophyta</taxon>
        <taxon>Embryophyta</taxon>
        <taxon>Tracheophyta</taxon>
        <taxon>Spermatophyta</taxon>
        <taxon>Magnoliopsida</taxon>
        <taxon>eudicotyledons</taxon>
        <taxon>Gunneridae</taxon>
        <taxon>Pentapetalae</taxon>
        <taxon>asterids</taxon>
        <taxon>campanulids</taxon>
        <taxon>Asterales</taxon>
        <taxon>Asteraceae</taxon>
        <taxon>Asteroideae</taxon>
        <taxon>Astereae</taxon>
        <taxon>Australasian lineages</taxon>
        <taxon>Asterinae</taxon>
        <taxon>Aster</taxon>
    </lineage>
</organism>
<proteinExistence type="evidence at protein level"/>
<keyword id="KW-0413">Isomerase</keyword>
<keyword id="KW-0677">Repeat</keyword>
<accession>F8WQD0</accession>
<name>SHS1_ASTTA</name>
<comment type="function">
    <text evidence="2">Oxidosqualene cyclase involved in the production of shionone, a triterpenoid with a rare 6/6/6/6 tetracyclic skeleton and a C-3 carbonyl carbon. Also produces small amounts of beta-amyrin, friedelin, dammara-20,24-dienol, and 4-epishionone.</text>
</comment>
<comment type="catalytic activity">
    <reaction evidence="2">
        <text>(S)-2,3-epoxysqualene = shionone</text>
        <dbReference type="Rhea" id="RHEA:31847"/>
        <dbReference type="ChEBI" id="CHEBI:15441"/>
        <dbReference type="ChEBI" id="CHEBI:63459"/>
        <dbReference type="EC" id="5.4.99.46"/>
    </reaction>
</comment>
<comment type="tissue specificity">
    <text evidence="2">Expressed in stems, leaves and flowers. Lower expression in roots, stolons, rhizomes and radical leaves.</text>
</comment>
<comment type="similarity">
    <text evidence="3">Belongs to the terpene cyclase/mutase family.</text>
</comment>
<feature type="chain" id="PRO_0000418917" description="Shionone synthase">
    <location>
        <begin position="1"/>
        <end position="761"/>
    </location>
</feature>
<feature type="repeat" description="PFTB 1">
    <location>
        <begin position="148"/>
        <end position="189"/>
    </location>
</feature>
<feature type="repeat" description="PFTB 2">
    <location>
        <begin position="513"/>
        <end position="555"/>
    </location>
</feature>
<feature type="repeat" description="PFTB 3">
    <location>
        <begin position="590"/>
        <end position="630"/>
    </location>
</feature>
<feature type="repeat" description="PFTB 4">
    <location>
        <begin position="639"/>
        <end position="680"/>
    </location>
</feature>
<feature type="active site" description="Proton donor" evidence="1">
    <location>
        <position position="484"/>
    </location>
</feature>
<evidence type="ECO:0000250" key="1">
    <source>
        <dbReference type="UniProtKB" id="P48449"/>
    </source>
</evidence>
<evidence type="ECO:0000269" key="2">
    <source>
    </source>
</evidence>
<evidence type="ECO:0000305" key="3"/>